<protein>
    <recommendedName>
        <fullName evidence="16">Oxysterol-binding protein-related protein 1</fullName>
        <shortName>ORP-1</shortName>
        <shortName>OSBP-related protein 1</shortName>
    </recommendedName>
</protein>
<keyword id="KW-0002">3D-structure</keyword>
<keyword id="KW-0025">Alternative splicing</keyword>
<keyword id="KW-0040">ANK repeat</keyword>
<keyword id="KW-0175">Coiled coil</keyword>
<keyword id="KW-0967">Endosome</keyword>
<keyword id="KW-0445">Lipid transport</keyword>
<keyword id="KW-0446">Lipid-binding</keyword>
<keyword id="KW-0597">Phosphoprotein</keyword>
<keyword id="KW-1267">Proteomics identification</keyword>
<keyword id="KW-1185">Reference proteome</keyword>
<keyword id="KW-0677">Repeat</keyword>
<keyword id="KW-0813">Transport</keyword>
<comment type="function">
    <text evidence="1 8 10">Binds phospholipids; exhibits strong binding to phosphatidic acid and weak binding to phosphatidylinositol 3-phosphate (By similarity). Stabilizes GTP-bound RAB7A on late endosomes/lysosomes and alters functional properties of late endocytic compartments via its interaction with RAB7A (PubMed:16176980). Binds 25-hydroxycholesterol and cholesterol (PubMed:17428193).</text>
</comment>
<comment type="subunit">
    <text evidence="2 3 9 11 12">Interacts (via FFAT motif) with VAPA and VAPB (PubMed:33124732). Interacts with the GTP-bound form of RAB7A (PubMed:17081983). Interacts with OAS1B (By similarity). Interacts (via FFAT motif) with MOSPD2 (via MSP domain) (PubMed:29858488, PubMed:33124732).</text>
</comment>
<comment type="interaction">
    <interactant intactId="EBI-765918">
        <id>Q9BXW6</id>
    </interactant>
    <interactant intactId="EBI-16439278">
        <id>Q6FHY5</id>
        <label>MEOX2</label>
    </interactant>
    <organismsDiffer>false</organismsDiffer>
    <experiments>3</experiments>
</comment>
<comment type="interaction">
    <interactant intactId="EBI-765918">
        <id>Q9BXW6</id>
    </interactant>
    <interactant intactId="EBI-2812848">
        <id>Q8NHP6</id>
        <label>MOSPD2</label>
    </interactant>
    <organismsDiffer>false</organismsDiffer>
    <experiments>8</experiments>
</comment>
<comment type="interaction">
    <interactant intactId="EBI-765918">
        <id>Q9BXW6</id>
    </interactant>
    <interactant intactId="EBI-1056089">
        <id>P51149</id>
        <label>RAB7A</label>
    </interactant>
    <organismsDiffer>false</organismsDiffer>
    <experiments>5</experiments>
</comment>
<comment type="interaction">
    <interactant intactId="EBI-765918">
        <id>Q9BXW6</id>
    </interactant>
    <interactant intactId="EBI-1059156">
        <id>Q9P0L0</id>
        <label>VAPA</label>
    </interactant>
    <organismsDiffer>false</organismsDiffer>
    <experiments>6</experiments>
</comment>
<comment type="interaction">
    <interactant intactId="EBI-765918">
        <id>Q9BXW6</id>
    </interactant>
    <interactant intactId="EBI-1188298">
        <id>O95292</id>
        <label>VAPB</label>
    </interactant>
    <organismsDiffer>false</organismsDiffer>
    <experiments>7</experiments>
</comment>
<comment type="subcellular location">
    <subcellularLocation>
        <location evidence="8 11">Late endosome</location>
    </subcellularLocation>
    <text>Colocalizes with RAB7A, RAB9A and LAMP1 in late endosomes.</text>
</comment>
<comment type="alternative products">
    <event type="alternative splicing"/>
    <isoform>
        <id>Q9BXW6-1</id>
        <name>B</name>
        <name>OSBPL1B</name>
        <name>OSBP8L</name>
        <name>ORP1L</name>
        <sequence type="displayed"/>
    </isoform>
    <isoform>
        <id>Q9BXW6-2</id>
        <name>A</name>
        <name>OSBPL1A</name>
        <name>OSBP8S</name>
        <sequence type="described" ref="VSP_003779"/>
    </isoform>
    <isoform>
        <id>Q9BXW6-4</id>
        <name>4</name>
        <sequence type="described" ref="VSP_045443"/>
    </isoform>
</comment>
<comment type="domain">
    <text evidence="11 12">The FFAT motif is required for interaction with MOSPD2, VAPA and VAPB.</text>
</comment>
<comment type="similarity">
    <text evidence="16">Belongs to the OSBP family.</text>
</comment>
<comment type="sequence caution" evidence="16">
    <conflict type="miscellaneous discrepancy">
        <sequence resource="EMBL-CDS" id="AAG53407"/>
    </conflict>
    <text>Unlikely isoform. Aberrant splice sites.</text>
</comment>
<accession>Q9BXW6</accession>
<accession>B7Z7D3</accession>
<accession>Q9BZF5</accession>
<accession>Q9NW87</accession>
<evidence type="ECO:0000250" key="1"/>
<evidence type="ECO:0000250" key="2">
    <source>
        <dbReference type="UniProtKB" id="Q8K4M9"/>
    </source>
</evidence>
<evidence type="ECO:0000250" key="3">
    <source>
        <dbReference type="UniProtKB" id="Q91XL9"/>
    </source>
</evidence>
<evidence type="ECO:0000255" key="4"/>
<evidence type="ECO:0000255" key="5">
    <source>
        <dbReference type="PROSITE-ProRule" id="PRU00145"/>
    </source>
</evidence>
<evidence type="ECO:0000256" key="6">
    <source>
        <dbReference type="SAM" id="MobiDB-lite"/>
    </source>
</evidence>
<evidence type="ECO:0000269" key="7">
    <source>
    </source>
</evidence>
<evidence type="ECO:0000269" key="8">
    <source>
    </source>
</evidence>
<evidence type="ECO:0000269" key="9">
    <source>
    </source>
</evidence>
<evidence type="ECO:0000269" key="10">
    <source>
    </source>
</evidence>
<evidence type="ECO:0000269" key="11">
    <source>
    </source>
</evidence>
<evidence type="ECO:0000269" key="12">
    <source>
    </source>
</evidence>
<evidence type="ECO:0000303" key="13">
    <source>
    </source>
</evidence>
<evidence type="ECO:0000303" key="14">
    <source>
    </source>
</evidence>
<evidence type="ECO:0000303" key="15">
    <source>
    </source>
</evidence>
<evidence type="ECO:0000305" key="16"/>
<evidence type="ECO:0000312" key="17">
    <source>
        <dbReference type="HGNC" id="HGNC:16398"/>
    </source>
</evidence>
<evidence type="ECO:0007744" key="18">
    <source>
        <dbReference type="PDB" id="6TQS"/>
    </source>
</evidence>
<evidence type="ECO:0007744" key="19">
    <source>
    </source>
</evidence>
<evidence type="ECO:0007744" key="20">
    <source>
    </source>
</evidence>
<evidence type="ECO:0007744" key="21">
    <source>
    </source>
</evidence>
<evidence type="ECO:0007744" key="22">
    <source>
    </source>
</evidence>
<evidence type="ECO:0007744" key="23">
    <source>
    </source>
</evidence>
<evidence type="ECO:0007829" key="24">
    <source>
        <dbReference type="PDB" id="5ZM5"/>
    </source>
</evidence>
<evidence type="ECO:0007829" key="25">
    <source>
        <dbReference type="PDB" id="5ZM6"/>
    </source>
</evidence>
<evidence type="ECO:0007829" key="26">
    <source>
        <dbReference type="PDB" id="6IYB"/>
    </source>
</evidence>
<sequence length="950" mass="108470">MNTEAEQQLLHHARNGNAEEVRQLLETMARNEVIADINCKGRSKSNLGWTPLHLACYFGHRQVVQDLLKAGAEVNVLNDMGDTPLHRAAFTGRKELVMLLLEYNADTTIVNGSGQTAKEVTHAEEIRSMLEAVERTQQRKLEELLLAAAREGKTTELTALLNRPNPPDVNCSDQLGNTPLHCAAYRAHKQCALKLLRSGADPNLKNKNDQKPLDLAQGAEMKHILVGNKVIYKALKRYEGPLWKSSRFFGWRLFWVVLEHGVLSWYRKQPDAVHNIYRQGCKHLTQAVCTVKSTDSCLFFIKCFDDTIHGFRVPKNSLQQSREDWLEAIEEHSAYSTHYCSQDQLTDEEEEDTVSAADLKKSLEKAQSCQQRLDREISNFLKMIKECDMAKEMLPSFLQKVEVVSEASRETCVALTDCLNLFTKQEGVRNFKLEQEQEKNKILSEALETLATEHHELEQSLVKGSPPASILSEDEFYDALSDSESERSLSRLEAVTARSFEEEGEHLGSRKHRMSEEKDCGGGDALSNGIKKHRTSLPSPMFSRNDFSIWSILRKCIGMELSKITMPVIFNEPLSFLQRLTEYMEHTYLIHKASSLSDPVERMQCVAAFAVSAVASQWERTGKPFNPLLGETYELVRDDLGFRLISEQVSHHPPISAFHAEGLNNDFIFHGSIYPKLKFWGKSVEAEPKGTITLELLEHNEAYTWTNPTCCVHNIIVGKLWIEQYGNVEIINHKTGDKCVLNFKPCGLFGKELHKVEGYIQDKSKKKLCALYGKWTECLYSVDPATFDAYKKNDKKNTEEKKNSKQMSTSEELDEMPVPDSESVFIIPGSVLLWRIAPRPPNSAQMYNFTSFAMVLNEVDKDMESVIPKTDCRLRPDIRAMENGEIDQASEEKKRLEEKQRAARKNRSKSEEDWKTRWFHQGPNPYNGAQDWIYSGSYWDRNYFNLPDIY</sequence>
<organism>
    <name type="scientific">Homo sapiens</name>
    <name type="common">Human</name>
    <dbReference type="NCBI Taxonomy" id="9606"/>
    <lineage>
        <taxon>Eukaryota</taxon>
        <taxon>Metazoa</taxon>
        <taxon>Chordata</taxon>
        <taxon>Craniata</taxon>
        <taxon>Vertebrata</taxon>
        <taxon>Euteleostomi</taxon>
        <taxon>Mammalia</taxon>
        <taxon>Eutheria</taxon>
        <taxon>Euarchontoglires</taxon>
        <taxon>Primates</taxon>
        <taxon>Haplorrhini</taxon>
        <taxon>Catarrhini</taxon>
        <taxon>Hominidae</taxon>
        <taxon>Homo</taxon>
    </lineage>
</organism>
<feature type="chain" id="PRO_0000100367" description="Oxysterol-binding protein-related protein 1">
    <location>
        <begin position="1"/>
        <end position="950"/>
    </location>
</feature>
<feature type="repeat" description="ANK 1">
    <location>
        <begin position="47"/>
        <end position="76"/>
    </location>
</feature>
<feature type="repeat" description="ANK 2">
    <location>
        <begin position="80"/>
        <end position="109"/>
    </location>
</feature>
<feature type="repeat" description="ANK 3">
    <location>
        <begin position="175"/>
        <end position="204"/>
    </location>
</feature>
<feature type="domain" description="PH" evidence="5">
    <location>
        <begin position="235"/>
        <end position="334"/>
    </location>
</feature>
<feature type="region of interest" description="Interaction with RAB7A" evidence="8">
    <location>
        <begin position="1"/>
        <end position="237"/>
    </location>
</feature>
<feature type="region of interest" description="Disordered" evidence="6">
    <location>
        <begin position="501"/>
        <end position="527"/>
    </location>
</feature>
<feature type="region of interest" description="Disordered" evidence="6">
    <location>
        <begin position="795"/>
        <end position="816"/>
    </location>
</feature>
<feature type="region of interest" description="Disordered" evidence="6">
    <location>
        <begin position="881"/>
        <end position="913"/>
    </location>
</feature>
<feature type="coiled-coil region" evidence="4">
    <location>
        <begin position="430"/>
        <end position="463"/>
    </location>
</feature>
<feature type="coiled-coil region" evidence="4">
    <location>
        <begin position="877"/>
        <end position="913"/>
    </location>
</feature>
<feature type="short sequence motif" description="FFAT" evidence="11">
    <location>
        <begin position="469"/>
        <end position="485"/>
    </location>
</feature>
<feature type="compositionally biased region" description="Basic and acidic residues" evidence="6">
    <location>
        <begin position="501"/>
        <end position="521"/>
    </location>
</feature>
<feature type="compositionally biased region" description="Basic and acidic residues" evidence="6">
    <location>
        <begin position="890"/>
        <end position="901"/>
    </location>
</feature>
<feature type="modified residue" description="Phosphoserine" evidence="19 20 21 22 23">
    <location>
        <position position="499"/>
    </location>
</feature>
<feature type="splice variant" id="VSP_003779" description="In isoform A." evidence="13 14 15">
    <location>
        <begin position="1"/>
        <end position="513"/>
    </location>
</feature>
<feature type="splice variant" id="VSP_045443" description="In isoform 4." evidence="15">
    <location>
        <begin position="1"/>
        <end position="382"/>
    </location>
</feature>
<feature type="sequence variant" id="VAR_053547" description="In dbSNP:rs35693789." evidence="7">
    <original>S</original>
    <variation>P</variation>
    <location>
        <position position="810"/>
    </location>
</feature>
<feature type="mutagenesis site" description="Loss of interaction with MOSPD2." evidence="11">
    <original>FY</original>
    <variation>AA</variation>
    <location>
        <begin position="476"/>
        <end position="477"/>
    </location>
</feature>
<feature type="sequence conflict" description="In Ref. 4; AK001079." evidence="16" ref="4">
    <original>T</original>
    <variation>A</variation>
    <location>
        <position position="735"/>
    </location>
</feature>
<feature type="sequence conflict" description="In Ref. 1; AAL40662." evidence="16" ref="1">
    <original>P</original>
    <variation>S</variation>
    <location>
        <position position="841"/>
    </location>
</feature>
<feature type="sequence conflict" description="In Ref. 1; AAL40662." evidence="16" ref="1">
    <original>A</original>
    <variation>G</variation>
    <location>
        <position position="844"/>
    </location>
</feature>
<feature type="helix" evidence="26">
    <location>
        <begin position="5"/>
        <end position="15"/>
    </location>
</feature>
<feature type="helix" evidence="26">
    <location>
        <begin position="18"/>
        <end position="28"/>
    </location>
</feature>
<feature type="turn" evidence="26">
    <location>
        <begin position="29"/>
        <end position="31"/>
    </location>
</feature>
<feature type="turn" evidence="26">
    <location>
        <begin position="44"/>
        <end position="46"/>
    </location>
</feature>
<feature type="helix" evidence="26">
    <location>
        <begin position="51"/>
        <end position="58"/>
    </location>
</feature>
<feature type="helix" evidence="26">
    <location>
        <begin position="61"/>
        <end position="69"/>
    </location>
</feature>
<feature type="helix" evidence="26">
    <location>
        <begin position="84"/>
        <end position="90"/>
    </location>
</feature>
<feature type="helix" evidence="26">
    <location>
        <begin position="94"/>
        <end position="102"/>
    </location>
</feature>
<feature type="helix" evidence="26">
    <location>
        <begin position="117"/>
        <end position="120"/>
    </location>
</feature>
<feature type="helix" evidence="26">
    <location>
        <begin position="124"/>
        <end position="137"/>
    </location>
</feature>
<feature type="strand" evidence="25">
    <location>
        <begin position="544"/>
        <end position="546"/>
    </location>
</feature>
<feature type="helix" evidence="24">
    <location>
        <begin position="549"/>
        <end position="557"/>
    </location>
</feature>
<feature type="strand" evidence="24">
    <location>
        <begin position="558"/>
        <end position="560"/>
    </location>
</feature>
<feature type="helix" evidence="24">
    <location>
        <begin position="568"/>
        <end position="570"/>
    </location>
</feature>
<feature type="strand" evidence="24">
    <location>
        <begin position="571"/>
        <end position="575"/>
    </location>
</feature>
<feature type="helix" evidence="24">
    <location>
        <begin position="576"/>
        <end position="581"/>
    </location>
</feature>
<feature type="helix" evidence="24">
    <location>
        <begin position="582"/>
        <end position="584"/>
    </location>
</feature>
<feature type="turn" evidence="24">
    <location>
        <begin position="585"/>
        <end position="587"/>
    </location>
</feature>
<feature type="helix" evidence="24">
    <location>
        <begin position="588"/>
        <end position="594"/>
    </location>
</feature>
<feature type="helix" evidence="24">
    <location>
        <begin position="599"/>
        <end position="613"/>
    </location>
</feature>
<feature type="helix" evidence="24">
    <location>
        <begin position="614"/>
        <end position="617"/>
    </location>
</feature>
<feature type="strand" evidence="24">
    <location>
        <begin position="622"/>
        <end position="625"/>
    </location>
</feature>
<feature type="strand" evidence="24">
    <location>
        <begin position="632"/>
        <end position="637"/>
    </location>
</feature>
<feature type="turn" evidence="24">
    <location>
        <begin position="638"/>
        <end position="641"/>
    </location>
</feature>
<feature type="strand" evidence="24">
    <location>
        <begin position="642"/>
        <end position="650"/>
    </location>
</feature>
<feature type="turn" evidence="24">
    <location>
        <begin position="651"/>
        <end position="654"/>
    </location>
</feature>
<feature type="strand" evidence="24">
    <location>
        <begin position="655"/>
        <end position="662"/>
    </location>
</feature>
<feature type="strand" evidence="24">
    <location>
        <begin position="665"/>
        <end position="680"/>
    </location>
</feature>
<feature type="strand" evidence="24">
    <location>
        <begin position="683"/>
        <end position="690"/>
    </location>
</feature>
<feature type="strand" evidence="24">
    <location>
        <begin position="692"/>
        <end position="696"/>
    </location>
</feature>
<feature type="helix" evidence="24">
    <location>
        <begin position="697"/>
        <end position="699"/>
    </location>
</feature>
<feature type="strand" evidence="24">
    <location>
        <begin position="701"/>
        <end position="705"/>
    </location>
</feature>
<feature type="strand" evidence="24">
    <location>
        <begin position="709"/>
        <end position="718"/>
    </location>
</feature>
<feature type="strand" evidence="24">
    <location>
        <begin position="721"/>
        <end position="732"/>
    </location>
</feature>
<feature type="turn" evidence="24">
    <location>
        <begin position="733"/>
        <end position="735"/>
    </location>
</feature>
<feature type="strand" evidence="24">
    <location>
        <begin position="738"/>
        <end position="743"/>
    </location>
</feature>
<feature type="helix" evidence="24">
    <location>
        <begin position="748"/>
        <end position="750"/>
    </location>
</feature>
<feature type="turn" evidence="24">
    <location>
        <begin position="751"/>
        <end position="754"/>
    </location>
</feature>
<feature type="strand" evidence="24">
    <location>
        <begin position="755"/>
        <end position="761"/>
    </location>
</feature>
<feature type="strand" evidence="24">
    <location>
        <begin position="767"/>
        <end position="774"/>
    </location>
</feature>
<feature type="turn" evidence="24">
    <location>
        <begin position="775"/>
        <end position="777"/>
    </location>
</feature>
<feature type="strand" evidence="24">
    <location>
        <begin position="778"/>
        <end position="782"/>
    </location>
</feature>
<feature type="helix" evidence="24">
    <location>
        <begin position="784"/>
        <end position="792"/>
    </location>
</feature>
<feature type="strand" evidence="24">
    <location>
        <begin position="831"/>
        <end position="835"/>
    </location>
</feature>
<feature type="helix" evidence="24">
    <location>
        <begin position="843"/>
        <end position="845"/>
    </location>
</feature>
<feature type="turn" evidence="24">
    <location>
        <begin position="846"/>
        <end position="848"/>
    </location>
</feature>
<feature type="helix" evidence="24">
    <location>
        <begin position="851"/>
        <end position="856"/>
    </location>
</feature>
<feature type="helix" evidence="24">
    <location>
        <begin position="861"/>
        <end position="864"/>
    </location>
</feature>
<feature type="helix" evidence="24">
    <location>
        <begin position="872"/>
        <end position="874"/>
    </location>
</feature>
<feature type="helix" evidence="24">
    <location>
        <begin position="876"/>
        <end position="882"/>
    </location>
</feature>
<feature type="helix" evidence="24">
    <location>
        <begin position="886"/>
        <end position="909"/>
    </location>
</feature>
<feature type="strand" evidence="24">
    <location>
        <begin position="917"/>
        <end position="923"/>
    </location>
</feature>
<feature type="turn" evidence="24">
    <location>
        <begin position="925"/>
        <end position="927"/>
    </location>
</feature>
<feature type="strand" evidence="24">
    <location>
        <begin position="930"/>
        <end position="934"/>
    </location>
</feature>
<feature type="helix" evidence="24">
    <location>
        <begin position="938"/>
        <end position="940"/>
    </location>
</feature>
<proteinExistence type="evidence at protein level"/>
<dbReference type="EMBL" id="AF392449">
    <property type="protein sequence ID" value="AAL40662.1"/>
    <property type="molecule type" value="mRNA"/>
</dbReference>
<dbReference type="EMBL" id="AF392450">
    <property type="protein sequence ID" value="AAL40663.1"/>
    <property type="molecule type" value="mRNA"/>
</dbReference>
<dbReference type="EMBL" id="AF274714">
    <property type="protein sequence ID" value="AAK15154.1"/>
    <property type="molecule type" value="mRNA"/>
</dbReference>
<dbReference type="EMBL" id="AF323726">
    <property type="protein sequence ID" value="AAG53407.2"/>
    <property type="status" value="ALT_SEQ"/>
    <property type="molecule type" value="mRNA"/>
</dbReference>
<dbReference type="EMBL" id="AK001079">
    <property type="status" value="NOT_ANNOTATED_CDS"/>
    <property type="molecule type" value="mRNA"/>
</dbReference>
<dbReference type="EMBL" id="AK301862">
    <property type="protein sequence ID" value="BAH13569.1"/>
    <property type="molecule type" value="mRNA"/>
</dbReference>
<dbReference type="EMBL" id="AC023983">
    <property type="status" value="NOT_ANNOTATED_CDS"/>
    <property type="molecule type" value="Genomic_DNA"/>
</dbReference>
<dbReference type="EMBL" id="AC090772">
    <property type="status" value="NOT_ANNOTATED_CDS"/>
    <property type="molecule type" value="Genomic_DNA"/>
</dbReference>
<dbReference type="CCDS" id="CCDS11884.1">
    <molecule id="Q9BXW6-1"/>
</dbReference>
<dbReference type="CCDS" id="CCDS11885.1">
    <molecule id="Q9BXW6-2"/>
</dbReference>
<dbReference type="CCDS" id="CCDS56056.1">
    <molecule id="Q9BXW6-4"/>
</dbReference>
<dbReference type="RefSeq" id="NP_001229437.1">
    <molecule id="Q9BXW6-4"/>
    <property type="nucleotide sequence ID" value="NM_001242508.1"/>
</dbReference>
<dbReference type="RefSeq" id="NP_060500.3">
    <molecule id="Q9BXW6-2"/>
    <property type="nucleotide sequence ID" value="NM_018030.4"/>
</dbReference>
<dbReference type="RefSeq" id="NP_542164.2">
    <molecule id="Q9BXW6-1"/>
    <property type="nucleotide sequence ID" value="NM_080597.3"/>
</dbReference>
<dbReference type="RefSeq" id="XP_016881022.1">
    <property type="nucleotide sequence ID" value="XM_017025533.1"/>
</dbReference>
<dbReference type="RefSeq" id="XP_016881023.1">
    <property type="nucleotide sequence ID" value="XM_017025534.1"/>
</dbReference>
<dbReference type="PDB" id="5ZM5">
    <property type="method" value="X-ray"/>
    <property type="resolution" value="2.60 A"/>
    <property type="chains" value="A=534-950"/>
</dbReference>
<dbReference type="PDB" id="5ZM6">
    <property type="method" value="X-ray"/>
    <property type="resolution" value="2.70 A"/>
    <property type="chains" value="A/B=524-950"/>
</dbReference>
<dbReference type="PDB" id="5ZM7">
    <property type="method" value="X-ray"/>
    <property type="resolution" value="3.40 A"/>
    <property type="chains" value="A=524-950"/>
</dbReference>
<dbReference type="PDB" id="6IYB">
    <property type="method" value="X-ray"/>
    <property type="resolution" value="2.09 A"/>
    <property type="chains" value="B/D=5-152"/>
</dbReference>
<dbReference type="PDB" id="6TQS">
    <property type="method" value="X-ray"/>
    <property type="resolution" value="2.25 A"/>
    <property type="chains" value="G/H/I/J/K=469-485"/>
</dbReference>
<dbReference type="PDB" id="8ZQ3">
    <property type="method" value="X-ray"/>
    <property type="resolution" value="2.43 A"/>
    <property type="chains" value="B=1-205"/>
</dbReference>
<dbReference type="PDBsum" id="5ZM5"/>
<dbReference type="PDBsum" id="5ZM6"/>
<dbReference type="PDBsum" id="5ZM7"/>
<dbReference type="PDBsum" id="6IYB"/>
<dbReference type="PDBsum" id="6TQS"/>
<dbReference type="PDBsum" id="8ZQ3"/>
<dbReference type="SMR" id="Q9BXW6"/>
<dbReference type="BioGRID" id="125379">
    <property type="interactions" value="43"/>
</dbReference>
<dbReference type="CORUM" id="Q9BXW6"/>
<dbReference type="FunCoup" id="Q9BXW6">
    <property type="interactions" value="1266"/>
</dbReference>
<dbReference type="IntAct" id="Q9BXW6">
    <property type="interactions" value="35"/>
</dbReference>
<dbReference type="MINT" id="Q9BXW6"/>
<dbReference type="STRING" id="9606.ENSP00000320291"/>
<dbReference type="SwissLipids" id="SLP:000001534"/>
<dbReference type="GlyGen" id="Q9BXW6">
    <property type="glycosylation" value="1 site, 1 O-linked glycan (1 site)"/>
</dbReference>
<dbReference type="iPTMnet" id="Q9BXW6"/>
<dbReference type="PhosphoSitePlus" id="Q9BXW6"/>
<dbReference type="SwissPalm" id="Q9BXW6"/>
<dbReference type="BioMuta" id="OSBPL1A"/>
<dbReference type="DMDM" id="20143880"/>
<dbReference type="jPOST" id="Q9BXW6"/>
<dbReference type="MassIVE" id="Q9BXW6"/>
<dbReference type="PaxDb" id="9606-ENSP00000320291"/>
<dbReference type="PeptideAtlas" id="Q9BXW6"/>
<dbReference type="ProteomicsDB" id="6854"/>
<dbReference type="ProteomicsDB" id="79527">
    <molecule id="Q9BXW6-1"/>
</dbReference>
<dbReference type="ProteomicsDB" id="79528">
    <molecule id="Q9BXW6-2"/>
</dbReference>
<dbReference type="Pumba" id="Q9BXW6"/>
<dbReference type="Antibodypedia" id="22086">
    <property type="antibodies" value="191 antibodies from 29 providers"/>
</dbReference>
<dbReference type="DNASU" id="114876"/>
<dbReference type="Ensembl" id="ENST00000319481.8">
    <molecule id="Q9BXW6-1"/>
    <property type="protein sequence ID" value="ENSP00000320291.3"/>
    <property type="gene ID" value="ENSG00000141447.19"/>
</dbReference>
<dbReference type="Ensembl" id="ENST00000357041.8">
    <molecule id="Q9BXW6-4"/>
    <property type="protein sequence ID" value="ENSP00000349545.4"/>
    <property type="gene ID" value="ENSG00000141447.19"/>
</dbReference>
<dbReference type="Ensembl" id="ENST00000399443.7">
    <molecule id="Q9BXW6-2"/>
    <property type="protein sequence ID" value="ENSP00000382372.3"/>
    <property type="gene ID" value="ENSG00000141447.19"/>
</dbReference>
<dbReference type="GeneID" id="114876"/>
<dbReference type="KEGG" id="hsa:114876"/>
<dbReference type="MANE-Select" id="ENST00000319481.8">
    <property type="protein sequence ID" value="ENSP00000320291.3"/>
    <property type="RefSeq nucleotide sequence ID" value="NM_080597.4"/>
    <property type="RefSeq protein sequence ID" value="NP_542164.2"/>
</dbReference>
<dbReference type="UCSC" id="uc002kvd.5">
    <molecule id="Q9BXW6-1"/>
    <property type="organism name" value="human"/>
</dbReference>
<dbReference type="AGR" id="HGNC:16398"/>
<dbReference type="CTD" id="114876"/>
<dbReference type="DisGeNET" id="114876"/>
<dbReference type="GeneCards" id="OSBPL1A"/>
<dbReference type="HGNC" id="HGNC:16398">
    <property type="gene designation" value="OSBPL1A"/>
</dbReference>
<dbReference type="HPA" id="ENSG00000141447">
    <property type="expression patterns" value="Low tissue specificity"/>
</dbReference>
<dbReference type="MIM" id="606730">
    <property type="type" value="gene"/>
</dbReference>
<dbReference type="neXtProt" id="NX_Q9BXW6"/>
<dbReference type="OpenTargets" id="ENSG00000141447"/>
<dbReference type="PharmGKB" id="PA32826"/>
<dbReference type="VEuPathDB" id="HostDB:ENSG00000141447"/>
<dbReference type="eggNOG" id="KOG2209">
    <property type="taxonomic scope" value="Eukaryota"/>
</dbReference>
<dbReference type="GeneTree" id="ENSGT00940000155295"/>
<dbReference type="HOGENOM" id="CLU_007105_5_1_1"/>
<dbReference type="InParanoid" id="Q9BXW6"/>
<dbReference type="OMA" id="HAESPHF"/>
<dbReference type="OrthoDB" id="416222at2759"/>
<dbReference type="PAN-GO" id="Q9BXW6">
    <property type="GO annotations" value="5 GO annotations based on evolutionary models"/>
</dbReference>
<dbReference type="PhylomeDB" id="Q9BXW6"/>
<dbReference type="TreeFam" id="TF320922"/>
<dbReference type="PathwayCommons" id="Q9BXW6"/>
<dbReference type="Reactome" id="R-HSA-192105">
    <property type="pathway name" value="Synthesis of bile acids and bile salts"/>
</dbReference>
<dbReference type="Reactome" id="R-HSA-2132295">
    <property type="pathway name" value="MHC class II antigen presentation"/>
</dbReference>
<dbReference type="SignaLink" id="Q9BXW6"/>
<dbReference type="BioGRID-ORCS" id="114876">
    <property type="hits" value="11 hits in 1156 CRISPR screens"/>
</dbReference>
<dbReference type="ChiTaRS" id="OSBPL1A">
    <property type="organism name" value="human"/>
</dbReference>
<dbReference type="GeneWiki" id="OSBPL1A"/>
<dbReference type="GenomeRNAi" id="114876"/>
<dbReference type="Pharos" id="Q9BXW6">
    <property type="development level" value="Tbio"/>
</dbReference>
<dbReference type="PRO" id="PR:Q9BXW6"/>
<dbReference type="Proteomes" id="UP000005640">
    <property type="component" value="Chromosome 18"/>
</dbReference>
<dbReference type="RNAct" id="Q9BXW6">
    <property type="molecule type" value="protein"/>
</dbReference>
<dbReference type="Bgee" id="ENSG00000141447">
    <property type="expression patterns" value="Expressed in corpus callosum and 203 other cell types or tissues"/>
</dbReference>
<dbReference type="ExpressionAtlas" id="Q9BXW6">
    <property type="expression patterns" value="baseline and differential"/>
</dbReference>
<dbReference type="GO" id="GO:0005829">
    <property type="term" value="C:cytosol"/>
    <property type="evidence" value="ECO:0000318"/>
    <property type="project" value="GO_Central"/>
</dbReference>
<dbReference type="GO" id="GO:0005768">
    <property type="term" value="C:endosome"/>
    <property type="evidence" value="ECO:0000314"/>
    <property type="project" value="UniProtKB"/>
</dbReference>
<dbReference type="GO" id="GO:0070062">
    <property type="term" value="C:extracellular exosome"/>
    <property type="evidence" value="ECO:0007005"/>
    <property type="project" value="UniProtKB"/>
</dbReference>
<dbReference type="GO" id="GO:0005770">
    <property type="term" value="C:late endosome"/>
    <property type="evidence" value="ECO:0000314"/>
    <property type="project" value="UniProtKB"/>
</dbReference>
<dbReference type="GO" id="GO:0044232">
    <property type="term" value="C:organelle membrane contact site"/>
    <property type="evidence" value="ECO:0000314"/>
    <property type="project" value="UniProtKB"/>
</dbReference>
<dbReference type="GO" id="GO:0097038">
    <property type="term" value="C:perinuclear endoplasmic reticulum"/>
    <property type="evidence" value="ECO:0000318"/>
    <property type="project" value="GO_Central"/>
</dbReference>
<dbReference type="GO" id="GO:0005886">
    <property type="term" value="C:plasma membrane"/>
    <property type="evidence" value="ECO:0000318"/>
    <property type="project" value="GO_Central"/>
</dbReference>
<dbReference type="GO" id="GO:0015485">
    <property type="term" value="F:cholesterol binding"/>
    <property type="evidence" value="ECO:0000314"/>
    <property type="project" value="BHF-UCL"/>
</dbReference>
<dbReference type="GO" id="GO:0005543">
    <property type="term" value="F:phospholipid binding"/>
    <property type="evidence" value="ECO:0000303"/>
    <property type="project" value="UniProtKB"/>
</dbReference>
<dbReference type="GO" id="GO:0120015">
    <property type="term" value="F:sterol transfer activity"/>
    <property type="evidence" value="ECO:0000304"/>
    <property type="project" value="Reactome"/>
</dbReference>
<dbReference type="GO" id="GO:0006699">
    <property type="term" value="P:bile acid biosynthetic process"/>
    <property type="evidence" value="ECO:0000304"/>
    <property type="project" value="Reactome"/>
</dbReference>
<dbReference type="GO" id="GO:0008203">
    <property type="term" value="P:cholesterol metabolic process"/>
    <property type="evidence" value="ECO:0000303"/>
    <property type="project" value="UniProtKB"/>
</dbReference>
<dbReference type="GO" id="GO:0016192">
    <property type="term" value="P:vesicle-mediated transport"/>
    <property type="evidence" value="ECO:0000303"/>
    <property type="project" value="UniProtKB"/>
</dbReference>
<dbReference type="CDD" id="cd13285">
    <property type="entry name" value="PH_ORP1"/>
    <property type="match status" value="1"/>
</dbReference>
<dbReference type="FunFam" id="1.25.40.20:FF:000094">
    <property type="entry name" value="Oxysterol-binding protein"/>
    <property type="match status" value="1"/>
</dbReference>
<dbReference type="FunFam" id="1.25.40.20:FF:000098">
    <property type="entry name" value="Oxysterol-binding protein"/>
    <property type="match status" value="1"/>
</dbReference>
<dbReference type="FunFam" id="2.30.29.30:FF:000231">
    <property type="entry name" value="Oxysterol-binding protein"/>
    <property type="match status" value="1"/>
</dbReference>
<dbReference type="FunFam" id="2.40.160.120:FF:000005">
    <property type="entry name" value="Oxysterol-binding protein"/>
    <property type="match status" value="1"/>
</dbReference>
<dbReference type="FunFam" id="3.30.70.3490:FF:000003">
    <property type="entry name" value="Oxysterol-binding protein"/>
    <property type="match status" value="1"/>
</dbReference>
<dbReference type="Gene3D" id="2.40.160.120">
    <property type="match status" value="1"/>
</dbReference>
<dbReference type="Gene3D" id="3.30.70.3490">
    <property type="match status" value="1"/>
</dbReference>
<dbReference type="Gene3D" id="1.25.40.20">
    <property type="entry name" value="Ankyrin repeat-containing domain"/>
    <property type="match status" value="2"/>
</dbReference>
<dbReference type="Gene3D" id="2.30.29.30">
    <property type="entry name" value="Pleckstrin-homology domain (PH domain)/Phosphotyrosine-binding domain (PTB)"/>
    <property type="match status" value="1"/>
</dbReference>
<dbReference type="InterPro" id="IPR002110">
    <property type="entry name" value="Ankyrin_rpt"/>
</dbReference>
<dbReference type="InterPro" id="IPR036770">
    <property type="entry name" value="Ankyrin_rpt-contain_sf"/>
</dbReference>
<dbReference type="InterPro" id="IPR037239">
    <property type="entry name" value="OSBP_sf"/>
</dbReference>
<dbReference type="InterPro" id="IPR000648">
    <property type="entry name" value="Oxysterol-bd"/>
</dbReference>
<dbReference type="InterPro" id="IPR018494">
    <property type="entry name" value="Oxysterol-bd_CS"/>
</dbReference>
<dbReference type="InterPro" id="IPR011993">
    <property type="entry name" value="PH-like_dom_sf"/>
</dbReference>
<dbReference type="InterPro" id="IPR001849">
    <property type="entry name" value="PH_domain"/>
</dbReference>
<dbReference type="PANTHER" id="PTHR10972">
    <property type="entry name" value="OXYSTEROL-BINDING PROTEIN-RELATED"/>
    <property type="match status" value="1"/>
</dbReference>
<dbReference type="PANTHER" id="PTHR10972:SF53">
    <property type="entry name" value="OXYSTEROL-BINDING PROTEIN-RELATED PROTEIN 1"/>
    <property type="match status" value="1"/>
</dbReference>
<dbReference type="Pfam" id="PF12796">
    <property type="entry name" value="Ank_2"/>
    <property type="match status" value="2"/>
</dbReference>
<dbReference type="Pfam" id="PF01237">
    <property type="entry name" value="Oxysterol_BP"/>
    <property type="match status" value="1"/>
</dbReference>
<dbReference type="PRINTS" id="PR01415">
    <property type="entry name" value="ANKYRIN"/>
</dbReference>
<dbReference type="SMART" id="SM00248">
    <property type="entry name" value="ANK"/>
    <property type="match status" value="3"/>
</dbReference>
<dbReference type="SMART" id="SM00233">
    <property type="entry name" value="PH"/>
    <property type="match status" value="1"/>
</dbReference>
<dbReference type="SUPFAM" id="SSF48403">
    <property type="entry name" value="Ankyrin repeat"/>
    <property type="match status" value="1"/>
</dbReference>
<dbReference type="SUPFAM" id="SSF144000">
    <property type="entry name" value="Oxysterol-binding protein-like"/>
    <property type="match status" value="1"/>
</dbReference>
<dbReference type="SUPFAM" id="SSF50729">
    <property type="entry name" value="PH domain-like"/>
    <property type="match status" value="1"/>
</dbReference>
<dbReference type="PROSITE" id="PS50297">
    <property type="entry name" value="ANK_REP_REGION"/>
    <property type="match status" value="1"/>
</dbReference>
<dbReference type="PROSITE" id="PS50088">
    <property type="entry name" value="ANK_REPEAT"/>
    <property type="match status" value="3"/>
</dbReference>
<dbReference type="PROSITE" id="PS01013">
    <property type="entry name" value="OSBP"/>
    <property type="match status" value="1"/>
</dbReference>
<dbReference type="PROSITE" id="PS50003">
    <property type="entry name" value="PH_DOMAIN"/>
    <property type="match status" value="1"/>
</dbReference>
<name>OSBL1_HUMAN</name>
<gene>
    <name evidence="17" type="primary">OSBPL1A</name>
    <name type="synonym">ORP1</name>
    <name type="synonym">OSBP8</name>
    <name type="synonym">OSBPL1</name>
    <name type="synonym">OSBPL1B</name>
</gene>
<reference key="1">
    <citation type="journal article" date="2001" name="Genomics">
        <title>A family of 12 human genes containing oxysterol-binding domains.</title>
        <authorList>
            <person name="Jaworski C.J."/>
            <person name="Moreira E."/>
            <person name="Li A."/>
            <person name="Lee R."/>
            <person name="Rodriguez I.R."/>
        </authorList>
    </citation>
    <scope>NUCLEOTIDE SEQUENCE [MRNA] (ISOFORMS A AND B)</scope>
    <scope>VARIANT PRO-810</scope>
</reference>
<reference key="2">
    <citation type="journal article" date="2001" name="J. Biol. Chem.">
        <title>Novel members of the human oxysterol-binding protein family bind phospholipids and regulate vesicle transport.</title>
        <authorList>
            <person name="Xu Y."/>
            <person name="Liu Y."/>
            <person name="Ridgway N.D."/>
            <person name="McMaster C.R."/>
        </authorList>
    </citation>
    <scope>NUCLEOTIDE SEQUENCE [MRNA] (ISOFORM A)</scope>
</reference>
<reference key="3">
    <citation type="journal article" date="2001" name="J. Lipid Res.">
        <title>The OSBP-related protein family in humans.</title>
        <authorList>
            <person name="Lehto M."/>
            <person name="Laitinen S."/>
            <person name="Chinetti G."/>
            <person name="Johansson M."/>
            <person name="Ehnholm C."/>
            <person name="Staels B."/>
            <person name="Ikonen E."/>
            <person name="Olkkonen V.M."/>
        </authorList>
    </citation>
    <scope>NUCLEOTIDE SEQUENCE [MRNA] (ISOFORM B)</scope>
    <scope>GENE FAMILY</scope>
</reference>
<reference key="4">
    <citation type="journal article" date="2004" name="Nat. Genet.">
        <title>Complete sequencing and characterization of 21,243 full-length human cDNAs.</title>
        <authorList>
            <person name="Ota T."/>
            <person name="Suzuki Y."/>
            <person name="Nishikawa T."/>
            <person name="Otsuki T."/>
            <person name="Sugiyama T."/>
            <person name="Irie R."/>
            <person name="Wakamatsu A."/>
            <person name="Hayashi K."/>
            <person name="Sato H."/>
            <person name="Nagai K."/>
            <person name="Kimura K."/>
            <person name="Makita H."/>
            <person name="Sekine M."/>
            <person name="Obayashi M."/>
            <person name="Nishi T."/>
            <person name="Shibahara T."/>
            <person name="Tanaka T."/>
            <person name="Ishii S."/>
            <person name="Yamamoto J."/>
            <person name="Saito K."/>
            <person name="Kawai Y."/>
            <person name="Isono Y."/>
            <person name="Nakamura Y."/>
            <person name="Nagahari K."/>
            <person name="Murakami K."/>
            <person name="Yasuda T."/>
            <person name="Iwayanagi T."/>
            <person name="Wagatsuma M."/>
            <person name="Shiratori A."/>
            <person name="Sudo H."/>
            <person name="Hosoiri T."/>
            <person name="Kaku Y."/>
            <person name="Kodaira H."/>
            <person name="Kondo H."/>
            <person name="Sugawara M."/>
            <person name="Takahashi M."/>
            <person name="Kanda K."/>
            <person name="Yokoi T."/>
            <person name="Furuya T."/>
            <person name="Kikkawa E."/>
            <person name="Omura Y."/>
            <person name="Abe K."/>
            <person name="Kamihara K."/>
            <person name="Katsuta N."/>
            <person name="Sato K."/>
            <person name="Tanikawa M."/>
            <person name="Yamazaki M."/>
            <person name="Ninomiya K."/>
            <person name="Ishibashi T."/>
            <person name="Yamashita H."/>
            <person name="Murakawa K."/>
            <person name="Fujimori K."/>
            <person name="Tanai H."/>
            <person name="Kimata M."/>
            <person name="Watanabe M."/>
            <person name="Hiraoka S."/>
            <person name="Chiba Y."/>
            <person name="Ishida S."/>
            <person name="Ono Y."/>
            <person name="Takiguchi S."/>
            <person name="Watanabe S."/>
            <person name="Yosida M."/>
            <person name="Hotuta T."/>
            <person name="Kusano J."/>
            <person name="Kanehori K."/>
            <person name="Takahashi-Fujii A."/>
            <person name="Hara H."/>
            <person name="Tanase T.-O."/>
            <person name="Nomura Y."/>
            <person name="Togiya S."/>
            <person name="Komai F."/>
            <person name="Hara R."/>
            <person name="Takeuchi K."/>
            <person name="Arita M."/>
            <person name="Imose N."/>
            <person name="Musashino K."/>
            <person name="Yuuki H."/>
            <person name="Oshima A."/>
            <person name="Sasaki N."/>
            <person name="Aotsuka S."/>
            <person name="Yoshikawa Y."/>
            <person name="Matsunawa H."/>
            <person name="Ichihara T."/>
            <person name="Shiohata N."/>
            <person name="Sano S."/>
            <person name="Moriya S."/>
            <person name="Momiyama H."/>
            <person name="Satoh N."/>
            <person name="Takami S."/>
            <person name="Terashima Y."/>
            <person name="Suzuki O."/>
            <person name="Nakagawa S."/>
            <person name="Senoh A."/>
            <person name="Mizoguchi H."/>
            <person name="Goto Y."/>
            <person name="Shimizu F."/>
            <person name="Wakebe H."/>
            <person name="Hishigaki H."/>
            <person name="Watanabe T."/>
            <person name="Sugiyama A."/>
            <person name="Takemoto M."/>
            <person name="Kawakami B."/>
            <person name="Yamazaki M."/>
            <person name="Watanabe K."/>
            <person name="Kumagai A."/>
            <person name="Itakura S."/>
            <person name="Fukuzumi Y."/>
            <person name="Fujimori Y."/>
            <person name="Komiyama M."/>
            <person name="Tashiro H."/>
            <person name="Tanigami A."/>
            <person name="Fujiwara T."/>
            <person name="Ono T."/>
            <person name="Yamada K."/>
            <person name="Fujii Y."/>
            <person name="Ozaki K."/>
            <person name="Hirao M."/>
            <person name="Ohmori Y."/>
            <person name="Kawabata A."/>
            <person name="Hikiji T."/>
            <person name="Kobatake N."/>
            <person name="Inagaki H."/>
            <person name="Ikema Y."/>
            <person name="Okamoto S."/>
            <person name="Okitani R."/>
            <person name="Kawakami T."/>
            <person name="Noguchi S."/>
            <person name="Itoh T."/>
            <person name="Shigeta K."/>
            <person name="Senba T."/>
            <person name="Matsumura K."/>
            <person name="Nakajima Y."/>
            <person name="Mizuno T."/>
            <person name="Morinaga M."/>
            <person name="Sasaki M."/>
            <person name="Togashi T."/>
            <person name="Oyama M."/>
            <person name="Hata H."/>
            <person name="Watanabe M."/>
            <person name="Komatsu T."/>
            <person name="Mizushima-Sugano J."/>
            <person name="Satoh T."/>
            <person name="Shirai Y."/>
            <person name="Takahashi Y."/>
            <person name="Nakagawa K."/>
            <person name="Okumura K."/>
            <person name="Nagase T."/>
            <person name="Nomura N."/>
            <person name="Kikuchi H."/>
            <person name="Masuho Y."/>
            <person name="Yamashita R."/>
            <person name="Nakai K."/>
            <person name="Yada T."/>
            <person name="Nakamura Y."/>
            <person name="Ohara O."/>
            <person name="Isogai T."/>
            <person name="Sugano S."/>
        </authorList>
    </citation>
    <scope>NUCLEOTIDE SEQUENCE [LARGE SCALE MRNA] (ISOFORM 4)</scope>
    <scope>NUCLEOTIDE SEQUENCE [LARGE SCALE MRNA] OF 514-790 (ISOFORM A)</scope>
    <source>
        <tissue>Embryo</tissue>
    </source>
</reference>
<reference key="5">
    <citation type="journal article" date="2005" name="Nature">
        <title>DNA sequence and analysis of human chromosome 18.</title>
        <authorList>
            <person name="Nusbaum C."/>
            <person name="Zody M.C."/>
            <person name="Borowsky M.L."/>
            <person name="Kamal M."/>
            <person name="Kodira C.D."/>
            <person name="Taylor T.D."/>
            <person name="Whittaker C.A."/>
            <person name="Chang J.L."/>
            <person name="Cuomo C.A."/>
            <person name="Dewar K."/>
            <person name="FitzGerald M.G."/>
            <person name="Yang X."/>
            <person name="Abouelleil A."/>
            <person name="Allen N.R."/>
            <person name="Anderson S."/>
            <person name="Bloom T."/>
            <person name="Bugalter B."/>
            <person name="Butler J."/>
            <person name="Cook A."/>
            <person name="DeCaprio D."/>
            <person name="Engels R."/>
            <person name="Garber M."/>
            <person name="Gnirke A."/>
            <person name="Hafez N."/>
            <person name="Hall J.L."/>
            <person name="Norman C.H."/>
            <person name="Itoh T."/>
            <person name="Jaffe D.B."/>
            <person name="Kuroki Y."/>
            <person name="Lehoczky J."/>
            <person name="Lui A."/>
            <person name="Macdonald P."/>
            <person name="Mauceli E."/>
            <person name="Mikkelsen T.S."/>
            <person name="Naylor J.W."/>
            <person name="Nicol R."/>
            <person name="Nguyen C."/>
            <person name="Noguchi H."/>
            <person name="O'Leary S.B."/>
            <person name="Piqani B."/>
            <person name="Smith C.L."/>
            <person name="Talamas J.A."/>
            <person name="Topham K."/>
            <person name="Totoki Y."/>
            <person name="Toyoda A."/>
            <person name="Wain H.M."/>
            <person name="Young S.K."/>
            <person name="Zeng Q."/>
            <person name="Zimmer A.R."/>
            <person name="Fujiyama A."/>
            <person name="Hattori M."/>
            <person name="Birren B.W."/>
            <person name="Sakaki Y."/>
            <person name="Lander E.S."/>
        </authorList>
    </citation>
    <scope>NUCLEOTIDE SEQUENCE [LARGE SCALE GENOMIC DNA]</scope>
</reference>
<reference key="6">
    <citation type="journal article" date="2005" name="Mol. Biol. Cell">
        <title>The oxysterol-binding protein homologue ORP1L interacts with Rab7 and alters functional properties of late endocytic compartments.</title>
        <authorList>
            <person name="Johansson M."/>
            <person name="Lehto M."/>
            <person name="Tanhuanpaeae K."/>
            <person name="Cover T.L."/>
            <person name="Olkkonen V.M."/>
        </authorList>
    </citation>
    <scope>FUNCTION</scope>
    <scope>SUBCELLULAR LOCATION</scope>
    <scope>INTERACTION WITH RAB7A</scope>
</reference>
<reference key="7">
    <citation type="journal article" date="2006" name="Cell">
        <title>Global, in vivo, and site-specific phosphorylation dynamics in signaling networks.</title>
        <authorList>
            <person name="Olsen J.V."/>
            <person name="Blagoev B."/>
            <person name="Gnad F."/>
            <person name="Macek B."/>
            <person name="Kumar C."/>
            <person name="Mortensen P."/>
            <person name="Mann M."/>
        </authorList>
    </citation>
    <scope>PHOSPHORYLATION [LARGE SCALE ANALYSIS] AT SER-499</scope>
    <scope>IDENTIFICATION BY MASS SPECTROMETRY [LARGE SCALE ANALYSIS]</scope>
    <source>
        <tissue>Cervix carcinoma</tissue>
    </source>
</reference>
<reference key="8">
    <citation type="journal article" date="2007" name="Biochem. J.">
        <title>The mammalian oxysterol-binding protein-related proteins (ORPs) bind 25-hydroxycholesterol in an evolutionarily conserved pocket.</title>
        <authorList>
            <person name="Suchanek M."/>
            <person name="Hynynen R."/>
            <person name="Wohlfahrt G."/>
            <person name="Lehto M."/>
            <person name="Johansson M."/>
            <person name="Saarinen H."/>
            <person name="Radzikowska A."/>
            <person name="Thiele C."/>
            <person name="Olkkonen V.M."/>
        </authorList>
    </citation>
    <scope>FUNCTION</scope>
</reference>
<reference key="9">
    <citation type="journal article" date="2008" name="Proc. Natl. Acad. Sci. U.S.A.">
        <title>A quantitative atlas of mitotic phosphorylation.</title>
        <authorList>
            <person name="Dephoure N."/>
            <person name="Zhou C."/>
            <person name="Villen J."/>
            <person name="Beausoleil S.A."/>
            <person name="Bakalarski C.E."/>
            <person name="Elledge S.J."/>
            <person name="Gygi S.P."/>
        </authorList>
    </citation>
    <scope>PHOSPHORYLATION [LARGE SCALE ANALYSIS] AT SER-499</scope>
    <scope>IDENTIFICATION BY MASS SPECTROMETRY [LARGE SCALE ANALYSIS]</scope>
    <source>
        <tissue>Cervix carcinoma</tissue>
    </source>
</reference>
<reference key="10">
    <citation type="journal article" date="2010" name="Sci. Signal.">
        <title>Quantitative phosphoproteomics reveals widespread full phosphorylation site occupancy during mitosis.</title>
        <authorList>
            <person name="Olsen J.V."/>
            <person name="Vermeulen M."/>
            <person name="Santamaria A."/>
            <person name="Kumar C."/>
            <person name="Miller M.L."/>
            <person name="Jensen L.J."/>
            <person name="Gnad F."/>
            <person name="Cox J."/>
            <person name="Jensen T.S."/>
            <person name="Nigg E.A."/>
            <person name="Brunak S."/>
            <person name="Mann M."/>
        </authorList>
    </citation>
    <scope>PHOSPHORYLATION [LARGE SCALE ANALYSIS] AT SER-499</scope>
    <scope>IDENTIFICATION BY MASS SPECTROMETRY [LARGE SCALE ANALYSIS]</scope>
    <source>
        <tissue>Cervix carcinoma</tissue>
    </source>
</reference>
<reference key="11">
    <citation type="journal article" date="2011" name="BMC Syst. Biol.">
        <title>Initial characterization of the human central proteome.</title>
        <authorList>
            <person name="Burkard T.R."/>
            <person name="Planyavsky M."/>
            <person name="Kaupe I."/>
            <person name="Breitwieser F.P."/>
            <person name="Buerckstuemmer T."/>
            <person name="Bennett K.L."/>
            <person name="Superti-Furga G."/>
            <person name="Colinge J."/>
        </authorList>
    </citation>
    <scope>IDENTIFICATION BY MASS SPECTROMETRY [LARGE SCALE ANALYSIS]</scope>
</reference>
<reference key="12">
    <citation type="journal article" date="2011" name="Sci. Signal.">
        <title>System-wide temporal characterization of the proteome and phosphoproteome of human embryonic stem cell differentiation.</title>
        <authorList>
            <person name="Rigbolt K.T."/>
            <person name="Prokhorova T.A."/>
            <person name="Akimov V."/>
            <person name="Henningsen J."/>
            <person name="Johansen P.T."/>
            <person name="Kratchmarova I."/>
            <person name="Kassem M."/>
            <person name="Mann M."/>
            <person name="Olsen J.V."/>
            <person name="Blagoev B."/>
        </authorList>
    </citation>
    <scope>PHOSPHORYLATION [LARGE SCALE ANALYSIS] AT SER-499</scope>
    <scope>IDENTIFICATION BY MASS SPECTROMETRY [LARGE SCALE ANALYSIS]</scope>
</reference>
<reference key="13">
    <citation type="journal article" date="2013" name="J. Proteome Res.">
        <title>Toward a comprehensive characterization of a human cancer cell phosphoproteome.</title>
        <authorList>
            <person name="Zhou H."/>
            <person name="Di Palma S."/>
            <person name="Preisinger C."/>
            <person name="Peng M."/>
            <person name="Polat A.N."/>
            <person name="Heck A.J."/>
            <person name="Mohammed S."/>
        </authorList>
    </citation>
    <scope>PHOSPHORYLATION [LARGE SCALE ANALYSIS] AT SER-499</scope>
    <scope>IDENTIFICATION BY MASS SPECTROMETRY [LARGE SCALE ANALYSIS]</scope>
    <source>
        <tissue>Cervix carcinoma</tissue>
    </source>
</reference>
<reference key="14">
    <citation type="journal article" date="2018" name="EMBO Rep.">
        <title>Identification of MOSPD2, a novel scaffold for endoplasmic reticulum membrane contact sites.</title>
        <authorList>
            <person name="Di Mattia T."/>
            <person name="Wilhelm L.P."/>
            <person name="Ikhlef S."/>
            <person name="Wendling C."/>
            <person name="Spehner D."/>
            <person name="Nomine Y."/>
            <person name="Giordano F."/>
            <person name="Mathelin C."/>
            <person name="Drin G."/>
            <person name="Tomasetto C."/>
            <person name="Alpy F."/>
        </authorList>
    </citation>
    <scope>IDENTIFICATION BY MASS SPECTROMETRY</scope>
    <scope>INTERACTION WITH MOSPD2</scope>
    <scope>SUBCELLULAR LOCATION</scope>
    <scope>DOMAIN</scope>
    <scope>FFAT MOTIF</scope>
    <scope>MUTAGENESIS OF 476-PHE--TYR-477</scope>
</reference>
<reference evidence="18" key="15">
    <citation type="journal article" date="2020" name="EMBO J.">
        <title>FFAT motif phosphorylation controls formation and lipid transfer function of inter-organelle contacts.</title>
        <authorList>
            <person name="Di Mattia T."/>
            <person name="Martinet A."/>
            <person name="Ikhlef S."/>
            <person name="McEwen A.G."/>
            <person name="Nomine Y."/>
            <person name="Wendling C."/>
            <person name="Poussin-Courmontagne P."/>
            <person name="Voilquin L."/>
            <person name="Eberling P."/>
            <person name="Ruffenach F."/>
            <person name="Cavarelli J."/>
            <person name="Slee J."/>
            <person name="Levine T.P."/>
            <person name="Drin G."/>
            <person name="Tomasetto C."/>
            <person name="Alpy F."/>
        </authorList>
    </citation>
    <scope>X-RAY CRYSTALLOGRAPHY (2.25 ANGSTROMS) OF 469-485 IN COMPLEX WITH THE MSP DOMAIN OF MOSPD2</scope>
    <scope>INTERACTION WITH MOSPD2; VAPA AND VAPB</scope>
    <scope>DOMAIN</scope>
</reference>